<dbReference type="EC" id="2.7.11.22"/>
<dbReference type="EC" id="2.7.11.23"/>
<dbReference type="EMBL" id="CM001234">
    <property type="protein sequence ID" value="EHA49585.1"/>
    <property type="molecule type" value="Genomic_DNA"/>
</dbReference>
<dbReference type="RefSeq" id="XP_003715904.1">
    <property type="nucleotide sequence ID" value="XM_003715856.1"/>
</dbReference>
<dbReference type="SMR" id="A4QXX4"/>
<dbReference type="FunCoup" id="A4QXX4">
    <property type="interactions" value="1028"/>
</dbReference>
<dbReference type="STRING" id="242507.A4QXX4"/>
<dbReference type="EnsemblFungi" id="MGG_13931T0">
    <property type="protein sequence ID" value="MGG_13931T0"/>
    <property type="gene ID" value="MGG_13931"/>
</dbReference>
<dbReference type="GeneID" id="5049253"/>
<dbReference type="KEGG" id="mgr:MGG_13931"/>
<dbReference type="VEuPathDB" id="FungiDB:MGG_13931"/>
<dbReference type="eggNOG" id="KOG0666">
    <property type="taxonomic scope" value="Eukaryota"/>
</dbReference>
<dbReference type="InParanoid" id="A4QXX4"/>
<dbReference type="OMA" id="YFKNGGP"/>
<dbReference type="OrthoDB" id="6284126at2759"/>
<dbReference type="Proteomes" id="UP000009058">
    <property type="component" value="Chromosome 4"/>
</dbReference>
<dbReference type="GO" id="GO:1990508">
    <property type="term" value="C:CKM complex"/>
    <property type="evidence" value="ECO:0007669"/>
    <property type="project" value="EnsemblFungi"/>
</dbReference>
<dbReference type="GO" id="GO:0016592">
    <property type="term" value="C:mediator complex"/>
    <property type="evidence" value="ECO:0007669"/>
    <property type="project" value="EnsemblFungi"/>
</dbReference>
<dbReference type="GO" id="GO:0005524">
    <property type="term" value="F:ATP binding"/>
    <property type="evidence" value="ECO:0007669"/>
    <property type="project" value="UniProtKB-KW"/>
</dbReference>
<dbReference type="GO" id="GO:0004693">
    <property type="term" value="F:cyclin-dependent protein serine/threonine kinase activity"/>
    <property type="evidence" value="ECO:0007669"/>
    <property type="project" value="UniProtKB-EC"/>
</dbReference>
<dbReference type="GO" id="GO:0046872">
    <property type="term" value="F:metal ion binding"/>
    <property type="evidence" value="ECO:0007669"/>
    <property type="project" value="UniProtKB-KW"/>
</dbReference>
<dbReference type="GO" id="GO:0106310">
    <property type="term" value="F:protein serine kinase activity"/>
    <property type="evidence" value="ECO:0007669"/>
    <property type="project" value="RHEA"/>
</dbReference>
<dbReference type="GO" id="GO:0008353">
    <property type="term" value="F:RNA polymerase II CTD heptapeptide repeat kinase activity"/>
    <property type="evidence" value="ECO:0007669"/>
    <property type="project" value="UniProtKB-EC"/>
</dbReference>
<dbReference type="GO" id="GO:0060258">
    <property type="term" value="P:negative regulation of filamentous growth"/>
    <property type="evidence" value="ECO:0007669"/>
    <property type="project" value="EnsemblFungi"/>
</dbReference>
<dbReference type="GO" id="GO:0000122">
    <property type="term" value="P:negative regulation of transcription by RNA polymerase II"/>
    <property type="evidence" value="ECO:0007669"/>
    <property type="project" value="EnsemblFungi"/>
</dbReference>
<dbReference type="GO" id="GO:0070481">
    <property type="term" value="P:nuclear-transcribed mRNA catabolic process, non-stop decay"/>
    <property type="evidence" value="ECO:0007669"/>
    <property type="project" value="EnsemblFungi"/>
</dbReference>
<dbReference type="GO" id="GO:0051094">
    <property type="term" value="P:positive regulation of developmental process"/>
    <property type="evidence" value="ECO:0007669"/>
    <property type="project" value="UniProtKB-ARBA"/>
</dbReference>
<dbReference type="GO" id="GO:0045944">
    <property type="term" value="P:positive regulation of transcription by RNA polymerase II"/>
    <property type="evidence" value="ECO:0007669"/>
    <property type="project" value="EnsemblFungi"/>
</dbReference>
<dbReference type="GO" id="GO:0031648">
    <property type="term" value="P:protein destabilization"/>
    <property type="evidence" value="ECO:0007669"/>
    <property type="project" value="EnsemblFungi"/>
</dbReference>
<dbReference type="FunFam" id="1.10.510.10:FF:000408">
    <property type="entry name" value="Serine/threonine-protein kinase SSN3"/>
    <property type="match status" value="1"/>
</dbReference>
<dbReference type="FunFam" id="3.30.200.20:FF:000426">
    <property type="entry name" value="Serine/threonine-protein kinase ssn3"/>
    <property type="match status" value="1"/>
</dbReference>
<dbReference type="Gene3D" id="3.30.200.20">
    <property type="entry name" value="Phosphorylase Kinase, domain 1"/>
    <property type="match status" value="1"/>
</dbReference>
<dbReference type="Gene3D" id="1.10.510.10">
    <property type="entry name" value="Transferase(Phosphotransferase) domain 1"/>
    <property type="match status" value="1"/>
</dbReference>
<dbReference type="InterPro" id="IPR050108">
    <property type="entry name" value="CDK"/>
</dbReference>
<dbReference type="InterPro" id="IPR011009">
    <property type="entry name" value="Kinase-like_dom_sf"/>
</dbReference>
<dbReference type="InterPro" id="IPR000719">
    <property type="entry name" value="Prot_kinase_dom"/>
</dbReference>
<dbReference type="InterPro" id="IPR008271">
    <property type="entry name" value="Ser/Thr_kinase_AS"/>
</dbReference>
<dbReference type="PANTHER" id="PTHR24056">
    <property type="entry name" value="CELL DIVISION PROTEIN KINASE"/>
    <property type="match status" value="1"/>
</dbReference>
<dbReference type="PANTHER" id="PTHR24056:SF495">
    <property type="entry name" value="CYCLIN-DEPENDENT KINASE 8-RELATED"/>
    <property type="match status" value="1"/>
</dbReference>
<dbReference type="Pfam" id="PF00069">
    <property type="entry name" value="Pkinase"/>
    <property type="match status" value="1"/>
</dbReference>
<dbReference type="SMART" id="SM00220">
    <property type="entry name" value="S_TKc"/>
    <property type="match status" value="1"/>
</dbReference>
<dbReference type="SUPFAM" id="SSF56112">
    <property type="entry name" value="Protein kinase-like (PK-like)"/>
    <property type="match status" value="1"/>
</dbReference>
<dbReference type="PROSITE" id="PS50011">
    <property type="entry name" value="PROTEIN_KINASE_DOM"/>
    <property type="match status" value="1"/>
</dbReference>
<dbReference type="PROSITE" id="PS00108">
    <property type="entry name" value="PROTEIN_KINASE_ST"/>
    <property type="match status" value="1"/>
</dbReference>
<comment type="function">
    <text evidence="1">Component of the SRB8-11 complex. The SRB8-11 complex is a regulatory module of the Mediator complex which is itself involved in regulation of basal and activated RNA polymerase II-dependent transcription. The SRB8-11 complex may be involved in the transcriptional repression of a subset of genes regulated by Mediator. It may inhibit the association of the Mediator complex with RNA polymerase II to form the holoenzyme complex. The SRB8-11 complex phosphorylates the C-terminal domain (CTD) of the largest subunit of RNA polymerase II (By similarity).</text>
</comment>
<comment type="catalytic activity">
    <reaction>
        <text>L-seryl-[protein] + ATP = O-phospho-L-seryl-[protein] + ADP + H(+)</text>
        <dbReference type="Rhea" id="RHEA:17989"/>
        <dbReference type="Rhea" id="RHEA-COMP:9863"/>
        <dbReference type="Rhea" id="RHEA-COMP:11604"/>
        <dbReference type="ChEBI" id="CHEBI:15378"/>
        <dbReference type="ChEBI" id="CHEBI:29999"/>
        <dbReference type="ChEBI" id="CHEBI:30616"/>
        <dbReference type="ChEBI" id="CHEBI:83421"/>
        <dbReference type="ChEBI" id="CHEBI:456216"/>
        <dbReference type="EC" id="2.7.11.22"/>
    </reaction>
</comment>
<comment type="catalytic activity">
    <reaction>
        <text>L-threonyl-[protein] + ATP = O-phospho-L-threonyl-[protein] + ADP + H(+)</text>
        <dbReference type="Rhea" id="RHEA:46608"/>
        <dbReference type="Rhea" id="RHEA-COMP:11060"/>
        <dbReference type="Rhea" id="RHEA-COMP:11605"/>
        <dbReference type="ChEBI" id="CHEBI:15378"/>
        <dbReference type="ChEBI" id="CHEBI:30013"/>
        <dbReference type="ChEBI" id="CHEBI:30616"/>
        <dbReference type="ChEBI" id="CHEBI:61977"/>
        <dbReference type="ChEBI" id="CHEBI:456216"/>
        <dbReference type="EC" id="2.7.11.22"/>
    </reaction>
</comment>
<comment type="catalytic activity">
    <reaction>
        <text>[DNA-directed RNA polymerase] + ATP = phospho-[DNA-directed RNA polymerase] + ADP + H(+)</text>
        <dbReference type="Rhea" id="RHEA:10216"/>
        <dbReference type="Rhea" id="RHEA-COMP:11321"/>
        <dbReference type="Rhea" id="RHEA-COMP:11322"/>
        <dbReference type="ChEBI" id="CHEBI:15378"/>
        <dbReference type="ChEBI" id="CHEBI:30616"/>
        <dbReference type="ChEBI" id="CHEBI:43176"/>
        <dbReference type="ChEBI" id="CHEBI:68546"/>
        <dbReference type="ChEBI" id="CHEBI:456216"/>
        <dbReference type="EC" id="2.7.11.23"/>
    </reaction>
</comment>
<comment type="cofactor">
    <cofactor evidence="1">
        <name>Mg(2+)</name>
        <dbReference type="ChEBI" id="CHEBI:18420"/>
    </cofactor>
</comment>
<comment type="subunit">
    <text evidence="1">Component of the SRB8-11 complex, a regulatory module of the Mediator complex.</text>
</comment>
<comment type="subcellular location">
    <subcellularLocation>
        <location evidence="5">Nucleus</location>
    </subcellularLocation>
</comment>
<comment type="similarity">
    <text evidence="5">Belongs to the protein kinase superfamily. CMGC Ser/Thr protein kinase family. CDC2/CDKX subfamily.</text>
</comment>
<reference key="1">
    <citation type="journal article" date="2005" name="Nature">
        <title>The genome sequence of the rice blast fungus Magnaporthe grisea.</title>
        <authorList>
            <person name="Dean R.A."/>
            <person name="Talbot N.J."/>
            <person name="Ebbole D.J."/>
            <person name="Farman M.L."/>
            <person name="Mitchell T.K."/>
            <person name="Orbach M.J."/>
            <person name="Thon M.R."/>
            <person name="Kulkarni R."/>
            <person name="Xu J.-R."/>
            <person name="Pan H."/>
            <person name="Read N.D."/>
            <person name="Lee Y.-H."/>
            <person name="Carbone I."/>
            <person name="Brown D."/>
            <person name="Oh Y.Y."/>
            <person name="Donofrio N."/>
            <person name="Jeong J.S."/>
            <person name="Soanes D.M."/>
            <person name="Djonovic S."/>
            <person name="Kolomiets E."/>
            <person name="Rehmeyer C."/>
            <person name="Li W."/>
            <person name="Harding M."/>
            <person name="Kim S."/>
            <person name="Lebrun M.-H."/>
            <person name="Bohnert H."/>
            <person name="Coughlan S."/>
            <person name="Butler J."/>
            <person name="Calvo S.E."/>
            <person name="Ma L.-J."/>
            <person name="Nicol R."/>
            <person name="Purcell S."/>
            <person name="Nusbaum C."/>
            <person name="Galagan J.E."/>
            <person name="Birren B.W."/>
        </authorList>
    </citation>
    <scope>NUCLEOTIDE SEQUENCE [LARGE SCALE GENOMIC DNA]</scope>
    <source>
        <strain>70-15 / ATCC MYA-4617 / FGSC 8958</strain>
    </source>
</reference>
<evidence type="ECO:0000250" key="1"/>
<evidence type="ECO:0000255" key="2">
    <source>
        <dbReference type="PROSITE-ProRule" id="PRU00159"/>
    </source>
</evidence>
<evidence type="ECO:0000255" key="3">
    <source>
        <dbReference type="PROSITE-ProRule" id="PRU10027"/>
    </source>
</evidence>
<evidence type="ECO:0000256" key="4">
    <source>
        <dbReference type="SAM" id="MobiDB-lite"/>
    </source>
</evidence>
<evidence type="ECO:0000305" key="5"/>
<accession>A4QXX4</accession>
<accession>G4N9S7</accession>
<proteinExistence type="inferred from homology"/>
<organism>
    <name type="scientific">Pyricularia oryzae (strain 70-15 / ATCC MYA-4617 / FGSC 8958)</name>
    <name type="common">Rice blast fungus</name>
    <name type="synonym">Magnaporthe oryzae</name>
    <dbReference type="NCBI Taxonomy" id="242507"/>
    <lineage>
        <taxon>Eukaryota</taxon>
        <taxon>Fungi</taxon>
        <taxon>Dikarya</taxon>
        <taxon>Ascomycota</taxon>
        <taxon>Pezizomycotina</taxon>
        <taxon>Sordariomycetes</taxon>
        <taxon>Sordariomycetidae</taxon>
        <taxon>Magnaporthales</taxon>
        <taxon>Pyriculariaceae</taxon>
        <taxon>Pyricularia</taxon>
    </lineage>
</organism>
<feature type="chain" id="PRO_0000312947" description="Serine/threonine-protein kinase SSN3">
    <location>
        <begin position="1"/>
        <end position="499"/>
    </location>
</feature>
<feature type="domain" description="Protein kinase" evidence="2">
    <location>
        <begin position="61"/>
        <end position="442"/>
    </location>
</feature>
<feature type="region of interest" description="Disordered" evidence="4">
    <location>
        <begin position="1"/>
        <end position="21"/>
    </location>
</feature>
<feature type="region of interest" description="Disordered" evidence="4">
    <location>
        <begin position="332"/>
        <end position="376"/>
    </location>
</feature>
<feature type="region of interest" description="Disordered" evidence="4">
    <location>
        <begin position="463"/>
        <end position="499"/>
    </location>
</feature>
<feature type="compositionally biased region" description="Low complexity" evidence="4">
    <location>
        <begin position="365"/>
        <end position="376"/>
    </location>
</feature>
<feature type="compositionally biased region" description="Basic and acidic residues" evidence="4">
    <location>
        <begin position="463"/>
        <end position="472"/>
    </location>
</feature>
<feature type="active site" description="Proton acceptor" evidence="2 3">
    <location>
        <position position="193"/>
    </location>
</feature>
<feature type="binding site" evidence="2">
    <location>
        <begin position="67"/>
        <end position="75"/>
    </location>
    <ligand>
        <name>ATP</name>
        <dbReference type="ChEBI" id="CHEBI:30616"/>
    </ligand>
</feature>
<feature type="binding site" evidence="2">
    <location>
        <position position="91"/>
    </location>
    <ligand>
        <name>ATP</name>
        <dbReference type="ChEBI" id="CHEBI:30616"/>
    </ligand>
</feature>
<keyword id="KW-0010">Activator</keyword>
<keyword id="KW-0067">ATP-binding</keyword>
<keyword id="KW-0418">Kinase</keyword>
<keyword id="KW-0460">Magnesium</keyword>
<keyword id="KW-0479">Metal-binding</keyword>
<keyword id="KW-0547">Nucleotide-binding</keyword>
<keyword id="KW-0539">Nucleus</keyword>
<keyword id="KW-1185">Reference proteome</keyword>
<keyword id="KW-0678">Repressor</keyword>
<keyword id="KW-0723">Serine/threonine-protein kinase</keyword>
<keyword id="KW-0804">Transcription</keyword>
<keyword id="KW-0805">Transcription regulation</keyword>
<keyword id="KW-0808">Transferase</keyword>
<sequence length="499" mass="55094">MSHSNPPTGASGGPGSASASAAPARGYYSLKRSIQTAFNDPLDRGLGPPAYQSKVRVMDKYQVIGFISSGTYGRVYKARGRQGQPGEFAIKKFKPDKEGEQITYTGISQSAIREMALCSELRHPNVIRLVETILEDKAIFMVFEYAEHDLLQIIHHHTQQPKHPIPPQTIKSIMFQLLNGCQYLHTNWVLHRDLKPANIMVTSSGEVKVGDLGLARIFWKPVRTLMQGDKVVVTIWYRAPELLMGSHHYTPAVDMWAVGCIFAELLSLRPIFKGEEAKMDNTKKGGSRDMPFQRHQMQKIVDIMGMPTKERWPLLTSMPDYDKLPLLQPPLSASGYSQQPAHSHHHHQHYNQGPQYGGRAGGPTSSSSANSSSAAAAASQSHLDKWYYHTVSQGQTAGPMPHAPPGSLASLGVEGYKLLAGLLEYDPEKRLTAAAALQHNFFSTGDRVSANCFEGCKAEYPHRRVSQEDNDIRTGSVPGTKRSGMPDDSMGRPGKRVKE</sequence>
<protein>
    <recommendedName>
        <fullName>Serine/threonine-protein kinase SSN3</fullName>
        <ecNumber>2.7.11.22</ecNumber>
        <ecNumber>2.7.11.23</ecNumber>
    </recommendedName>
    <alternativeName>
        <fullName>Cyclin-dependent kinase 8</fullName>
    </alternativeName>
</protein>
<name>SSN3_PYRO7</name>
<gene>
    <name type="primary">SSN3</name>
    <name type="synonym">CDK8</name>
    <name type="ORF">MGG_13931</name>
</gene>